<evidence type="ECO:0000250" key="1"/>
<evidence type="ECO:0000305" key="2"/>
<accession>Q69TI0</accession>
<accession>A0A0P0WUH2</accession>
<accession>A8DA33</accession>
<feature type="chain" id="PRO_0000410711" description="Putative 12-oxophytodienoate reductase 5">
    <location>
        <begin position="1"/>
        <end position="374"/>
    </location>
</feature>
<feature type="active site" description="Proton donor" evidence="1">
    <location>
        <position position="182"/>
    </location>
</feature>
<feature type="binding site" evidence="1">
    <location>
        <begin position="30"/>
        <end position="32"/>
    </location>
    <ligand>
        <name>FMN</name>
        <dbReference type="ChEBI" id="CHEBI:58210"/>
    </ligand>
</feature>
<feature type="binding site" evidence="1">
    <location>
        <position position="63"/>
    </location>
    <ligand>
        <name>FMN</name>
        <dbReference type="ChEBI" id="CHEBI:58210"/>
    </ligand>
</feature>
<feature type="binding site" evidence="1">
    <location>
        <position position="105"/>
    </location>
    <ligand>
        <name>FMN</name>
        <dbReference type="ChEBI" id="CHEBI:58210"/>
    </ligand>
</feature>
<feature type="binding site" evidence="1">
    <location>
        <begin position="177"/>
        <end position="180"/>
    </location>
    <ligand>
        <name>substrate</name>
    </ligand>
</feature>
<feature type="binding site" evidence="1">
    <location>
        <position position="229"/>
    </location>
    <ligand>
        <name>FMN</name>
        <dbReference type="ChEBI" id="CHEBI:58210"/>
    </ligand>
</feature>
<feature type="binding site" evidence="1">
    <location>
        <position position="270"/>
    </location>
    <ligand>
        <name>substrate</name>
    </ligand>
</feature>
<feature type="binding site" evidence="1">
    <location>
        <position position="300"/>
    </location>
    <ligand>
        <name>FMN</name>
        <dbReference type="ChEBI" id="CHEBI:58210"/>
    </ligand>
</feature>
<feature type="binding site" evidence="1">
    <location>
        <begin position="321"/>
        <end position="322"/>
    </location>
    <ligand>
        <name>FMN</name>
        <dbReference type="ChEBI" id="CHEBI:58210"/>
    </ligand>
</feature>
<keyword id="KW-0275">Fatty acid biosynthesis</keyword>
<keyword id="KW-0276">Fatty acid metabolism</keyword>
<keyword id="KW-0285">Flavoprotein</keyword>
<keyword id="KW-0288">FMN</keyword>
<keyword id="KW-0444">Lipid biosynthesis</keyword>
<keyword id="KW-0443">Lipid metabolism</keyword>
<keyword id="KW-0521">NADP</keyword>
<keyword id="KW-0560">Oxidoreductase</keyword>
<keyword id="KW-0925">Oxylipin biosynthesis</keyword>
<keyword id="KW-1185">Reference proteome</keyword>
<gene>
    <name type="primary">OPR5</name>
    <name type="synonym">OPR-1</name>
    <name type="synonym">OPR6</name>
    <name type="ordered locus">Os06g0215600</name>
    <name type="ordered locus">LOC_Os06g11210</name>
    <name type="ORF">OSJNBb0024N18.5</name>
    <name type="ORF">P0537F07.27</name>
</gene>
<proteinExistence type="evidence at transcript level"/>
<reference key="1">
    <citation type="submission" date="2007-08" db="EMBL/GenBank/DDBJ databases">
        <title>Nipponbare OPR-1 mRNA.</title>
        <authorList>
            <person name="Singh V.K."/>
        </authorList>
    </citation>
    <scope>NUCLEOTIDE SEQUENCE [GENOMIC DNA / MRNA]</scope>
    <source>
        <strain>cv. Nipponbare</strain>
    </source>
</reference>
<reference key="2">
    <citation type="journal article" date="2005" name="Nature">
        <title>The map-based sequence of the rice genome.</title>
        <authorList>
            <consortium name="International rice genome sequencing project (IRGSP)"/>
        </authorList>
    </citation>
    <scope>NUCLEOTIDE SEQUENCE [LARGE SCALE GENOMIC DNA]</scope>
    <source>
        <strain>cv. Nipponbare</strain>
    </source>
</reference>
<reference key="3">
    <citation type="journal article" date="2008" name="Nucleic Acids Res.">
        <title>The rice annotation project database (RAP-DB): 2008 update.</title>
        <authorList>
            <consortium name="The rice annotation project (RAP)"/>
        </authorList>
    </citation>
    <scope>GENOME REANNOTATION</scope>
    <source>
        <strain>cv. Nipponbare</strain>
    </source>
</reference>
<reference key="4">
    <citation type="journal article" date="2013" name="Rice">
        <title>Improvement of the Oryza sativa Nipponbare reference genome using next generation sequence and optical map data.</title>
        <authorList>
            <person name="Kawahara Y."/>
            <person name="de la Bastide M."/>
            <person name="Hamilton J.P."/>
            <person name="Kanamori H."/>
            <person name="McCombie W.R."/>
            <person name="Ouyang S."/>
            <person name="Schwartz D.C."/>
            <person name="Tanaka T."/>
            <person name="Wu J."/>
            <person name="Zhou S."/>
            <person name="Childs K.L."/>
            <person name="Davidson R.M."/>
            <person name="Lin H."/>
            <person name="Quesada-Ocampo L."/>
            <person name="Vaillancourt B."/>
            <person name="Sakai H."/>
            <person name="Lee S.S."/>
            <person name="Kim J."/>
            <person name="Numa H."/>
            <person name="Itoh T."/>
            <person name="Buell C.R."/>
            <person name="Matsumoto T."/>
        </authorList>
    </citation>
    <scope>GENOME REANNOTATION</scope>
    <source>
        <strain>cv. Nipponbare</strain>
    </source>
</reference>
<reference key="5">
    <citation type="journal article" date="2003" name="Science">
        <title>Collection, mapping, and annotation of over 28,000 cDNA clones from japonica rice.</title>
        <authorList>
            <consortium name="The rice full-length cDNA consortium"/>
        </authorList>
    </citation>
    <scope>NUCLEOTIDE SEQUENCE [LARGE SCALE MRNA]</scope>
    <source>
        <strain>cv. Nipponbare</strain>
    </source>
</reference>
<protein>
    <recommendedName>
        <fullName>Putative 12-oxophytodienoate reductase 5</fullName>
        <ecNumber>1.3.1.-</ecNumber>
    </recommendedName>
    <alternativeName>
        <fullName>OPDA-reductase 5</fullName>
        <shortName>OsOPR5</shortName>
    </alternativeName>
</protein>
<name>OPR5_ORYSJ</name>
<organism>
    <name type="scientific">Oryza sativa subsp. japonica</name>
    <name type="common">Rice</name>
    <dbReference type="NCBI Taxonomy" id="39947"/>
    <lineage>
        <taxon>Eukaryota</taxon>
        <taxon>Viridiplantae</taxon>
        <taxon>Streptophyta</taxon>
        <taxon>Embryophyta</taxon>
        <taxon>Tracheophyta</taxon>
        <taxon>Spermatophyta</taxon>
        <taxon>Magnoliopsida</taxon>
        <taxon>Liliopsida</taxon>
        <taxon>Poales</taxon>
        <taxon>Poaceae</taxon>
        <taxon>BOP clade</taxon>
        <taxon>Oryzoideae</taxon>
        <taxon>Oryzeae</taxon>
        <taxon>Oryzinae</taxon>
        <taxon>Oryza</taxon>
        <taxon>Oryza sativa</taxon>
    </lineage>
</organism>
<comment type="function">
    <text evidence="1">Putative oxophytodienoate reductase that may be involved in the biosynthesis or metabolism of oxylipin signaling molecules.</text>
</comment>
<comment type="cofactor">
    <cofactor>
        <name>FMN</name>
        <dbReference type="ChEBI" id="CHEBI:58210"/>
    </cofactor>
</comment>
<comment type="similarity">
    <text evidence="2">Belongs to the NADH:flavin oxidoreductase/NADH oxidase family.</text>
</comment>
<comment type="sequence caution" evidence="2">
    <conflict type="erroneous initiation">
        <sequence resource="EMBL-CDS" id="ABV45434"/>
    </conflict>
    <text>Truncated N-terminus.</text>
</comment>
<sequence>MVNQAAMPLLTPYKQAGGKIDLSHRVLLSPMTRCRSYGNVPQPHAALYYTQRATSGGLLITEATGVSDTAQGYPETPGVWTREHVEAWKPIVDAVHRKGALFICQLWHVGRVSTNDYQPNGQAPISSSDIQITPDGSGIVYSKPRRLRVDEIPQIVDDFRLAARNAIEAGFDGVEIHGANGYLLEQFMKDSSNDRTDEYGGSLENRCRFAVEVIDAVVGEIGAHRVGIRLSPFLDFMDCVDSDPEALGSYMVEQLNKHEGFLYCHMVEPRMAIVDGRRQIQHGLLPFRKAFKGTFIAAGGYDREEGNKVIENGYTDLVSFGRLFLANPDLPKRFELDAPLNKYDRNTFYTQDPIVGYTDYPFLDEDQNNSVADA</sequence>
<dbReference type="EC" id="1.3.1.-"/>
<dbReference type="EMBL" id="EU146300">
    <property type="protein sequence ID" value="ABV45434.1"/>
    <property type="status" value="ALT_INIT"/>
    <property type="molecule type" value="Genomic_DNA"/>
</dbReference>
<dbReference type="EMBL" id="EU146301">
    <property type="protein sequence ID" value="ABV45435.1"/>
    <property type="molecule type" value="mRNA"/>
</dbReference>
<dbReference type="EMBL" id="AP003525">
    <property type="protein sequence ID" value="BAD35319.1"/>
    <property type="molecule type" value="Genomic_DNA"/>
</dbReference>
<dbReference type="EMBL" id="AP004741">
    <property type="protein sequence ID" value="BAD35827.1"/>
    <property type="molecule type" value="Genomic_DNA"/>
</dbReference>
<dbReference type="EMBL" id="AP008212">
    <property type="protein sequence ID" value="BAF19054.1"/>
    <property type="molecule type" value="Genomic_DNA"/>
</dbReference>
<dbReference type="EMBL" id="AP014962">
    <property type="protein sequence ID" value="BAS96780.1"/>
    <property type="molecule type" value="Genomic_DNA"/>
</dbReference>
<dbReference type="EMBL" id="AK061212">
    <property type="protein sequence ID" value="BAG87796.1"/>
    <property type="molecule type" value="mRNA"/>
</dbReference>
<dbReference type="RefSeq" id="XP_015644547.1">
    <property type="nucleotide sequence ID" value="XM_015789061.1"/>
</dbReference>
<dbReference type="SMR" id="Q69TI0"/>
<dbReference type="FunCoup" id="Q69TI0">
    <property type="interactions" value="162"/>
</dbReference>
<dbReference type="STRING" id="39947.Q69TI0"/>
<dbReference type="PaxDb" id="39947-Q69TI0"/>
<dbReference type="EnsemblPlants" id="Os06t0215600-02">
    <property type="protein sequence ID" value="Os06t0215600-02"/>
    <property type="gene ID" value="Os06g0215600"/>
</dbReference>
<dbReference type="Gramene" id="Os06t0215600-02">
    <property type="protein sequence ID" value="Os06t0215600-02"/>
    <property type="gene ID" value="Os06g0215600"/>
</dbReference>
<dbReference type="KEGG" id="dosa:Os06g0215600"/>
<dbReference type="eggNOG" id="KOG0134">
    <property type="taxonomic scope" value="Eukaryota"/>
</dbReference>
<dbReference type="HOGENOM" id="CLU_012153_0_0_1"/>
<dbReference type="InParanoid" id="Q69TI0"/>
<dbReference type="OMA" id="WALEEHY"/>
<dbReference type="OrthoDB" id="1663137at2759"/>
<dbReference type="Proteomes" id="UP000000763">
    <property type="component" value="Chromosome 6"/>
</dbReference>
<dbReference type="Proteomes" id="UP000059680">
    <property type="component" value="Chromosome 6"/>
</dbReference>
<dbReference type="GO" id="GO:0010181">
    <property type="term" value="F:FMN binding"/>
    <property type="evidence" value="ECO:0007669"/>
    <property type="project" value="InterPro"/>
</dbReference>
<dbReference type="GO" id="GO:0016491">
    <property type="term" value="F:oxidoreductase activity"/>
    <property type="evidence" value="ECO:0000318"/>
    <property type="project" value="GO_Central"/>
</dbReference>
<dbReference type="GO" id="GO:0009695">
    <property type="term" value="P:jasmonic acid biosynthetic process"/>
    <property type="evidence" value="ECO:0000318"/>
    <property type="project" value="GO_Central"/>
</dbReference>
<dbReference type="GO" id="GO:0031408">
    <property type="term" value="P:oxylipin biosynthetic process"/>
    <property type="evidence" value="ECO:0000318"/>
    <property type="project" value="GO_Central"/>
</dbReference>
<dbReference type="CDD" id="cd02933">
    <property type="entry name" value="OYE_like_FMN"/>
    <property type="match status" value="1"/>
</dbReference>
<dbReference type="FunFam" id="3.20.20.70:FF:000073">
    <property type="entry name" value="12-oxophytodienoate reductase 3"/>
    <property type="match status" value="1"/>
</dbReference>
<dbReference type="Gene3D" id="3.20.20.70">
    <property type="entry name" value="Aldolase class I"/>
    <property type="match status" value="1"/>
</dbReference>
<dbReference type="InterPro" id="IPR013785">
    <property type="entry name" value="Aldolase_TIM"/>
</dbReference>
<dbReference type="InterPro" id="IPR001155">
    <property type="entry name" value="OxRdtase_FMN_N"/>
</dbReference>
<dbReference type="InterPro" id="IPR045247">
    <property type="entry name" value="Oye-like"/>
</dbReference>
<dbReference type="PANTHER" id="PTHR22893:SF44">
    <property type="entry name" value="12-OXOPHYTODIENOATE REDUCTASE 1"/>
    <property type="match status" value="1"/>
</dbReference>
<dbReference type="PANTHER" id="PTHR22893">
    <property type="entry name" value="NADH OXIDOREDUCTASE-RELATED"/>
    <property type="match status" value="1"/>
</dbReference>
<dbReference type="Pfam" id="PF00724">
    <property type="entry name" value="Oxidored_FMN"/>
    <property type="match status" value="1"/>
</dbReference>
<dbReference type="SUPFAM" id="SSF51395">
    <property type="entry name" value="FMN-linked oxidoreductases"/>
    <property type="match status" value="1"/>
</dbReference>